<reference key="1">
    <citation type="journal article" date="2003" name="Nature">
        <title>The DNA sequence of human chromosome 7.</title>
        <authorList>
            <person name="Hillier L.W."/>
            <person name="Fulton R.S."/>
            <person name="Fulton L.A."/>
            <person name="Graves T.A."/>
            <person name="Pepin K.H."/>
            <person name="Wagner-McPherson C."/>
            <person name="Layman D."/>
            <person name="Maas J."/>
            <person name="Jaeger S."/>
            <person name="Walker R."/>
            <person name="Wylie K."/>
            <person name="Sekhon M."/>
            <person name="Becker M.C."/>
            <person name="O'Laughlin M.D."/>
            <person name="Schaller M.E."/>
            <person name="Fewell G.A."/>
            <person name="Delehaunty K.D."/>
            <person name="Miner T.L."/>
            <person name="Nash W.E."/>
            <person name="Cordes M."/>
            <person name="Du H."/>
            <person name="Sun H."/>
            <person name="Edwards J."/>
            <person name="Bradshaw-Cordum H."/>
            <person name="Ali J."/>
            <person name="Andrews S."/>
            <person name="Isak A."/>
            <person name="Vanbrunt A."/>
            <person name="Nguyen C."/>
            <person name="Du F."/>
            <person name="Lamar B."/>
            <person name="Courtney L."/>
            <person name="Kalicki J."/>
            <person name="Ozersky P."/>
            <person name="Bielicki L."/>
            <person name="Scott K."/>
            <person name="Holmes A."/>
            <person name="Harkins R."/>
            <person name="Harris A."/>
            <person name="Strong C.M."/>
            <person name="Hou S."/>
            <person name="Tomlinson C."/>
            <person name="Dauphin-Kohlberg S."/>
            <person name="Kozlowicz-Reilly A."/>
            <person name="Leonard S."/>
            <person name="Rohlfing T."/>
            <person name="Rock S.M."/>
            <person name="Tin-Wollam A.-M."/>
            <person name="Abbott A."/>
            <person name="Minx P."/>
            <person name="Maupin R."/>
            <person name="Strowmatt C."/>
            <person name="Latreille P."/>
            <person name="Miller N."/>
            <person name="Johnson D."/>
            <person name="Murray J."/>
            <person name="Woessner J.P."/>
            <person name="Wendl M.C."/>
            <person name="Yang S.-P."/>
            <person name="Schultz B.R."/>
            <person name="Wallis J.W."/>
            <person name="Spieth J."/>
            <person name="Bieri T.A."/>
            <person name="Nelson J.O."/>
            <person name="Berkowicz N."/>
            <person name="Wohldmann P.E."/>
            <person name="Cook L.L."/>
            <person name="Hickenbotham M.T."/>
            <person name="Eldred J."/>
            <person name="Williams D."/>
            <person name="Bedell J.A."/>
            <person name="Mardis E.R."/>
            <person name="Clifton S.W."/>
            <person name="Chissoe S.L."/>
            <person name="Marra M.A."/>
            <person name="Raymond C."/>
            <person name="Haugen E."/>
            <person name="Gillett W."/>
            <person name="Zhou Y."/>
            <person name="James R."/>
            <person name="Phelps K."/>
            <person name="Iadanoto S."/>
            <person name="Bubb K."/>
            <person name="Simms E."/>
            <person name="Levy R."/>
            <person name="Clendenning J."/>
            <person name="Kaul R."/>
            <person name="Kent W.J."/>
            <person name="Furey T.S."/>
            <person name="Baertsch R.A."/>
            <person name="Brent M.R."/>
            <person name="Keibler E."/>
            <person name="Flicek P."/>
            <person name="Bork P."/>
            <person name="Suyama M."/>
            <person name="Bailey J.A."/>
            <person name="Portnoy M.E."/>
            <person name="Torrents D."/>
            <person name="Chinwalla A.T."/>
            <person name="Gish W.R."/>
            <person name="Eddy S.R."/>
            <person name="McPherson J.D."/>
            <person name="Olson M.V."/>
            <person name="Eichler E.E."/>
            <person name="Green E.D."/>
            <person name="Waterston R.H."/>
            <person name="Wilson R.K."/>
        </authorList>
    </citation>
    <scope>NUCLEOTIDE SEQUENCE [LARGE SCALE GENOMIC DNA] (IMGT ALLELE TRBV7-1*01)</scope>
</reference>
<reference key="2">
    <citation type="journal article" date="1998" name="Exp. Clin. Immunogenet.">
        <title>IMGT (ImMunoGeneTics) locus on focus. A new section of Experimental and Clinical Immunogenetics.</title>
        <authorList>
            <person name="Lefranc M.P."/>
        </authorList>
    </citation>
    <scope>CHARACTERIZATION</scope>
</reference>
<reference key="3">
    <citation type="book" date="2001" name="The T Cell Receptor FactsBook.">
        <title>The T Cell Receptor FactsBook.</title>
        <editorList>
            <person name="Lefranc M.P."/>
            <person name="Lefranc G."/>
        </editorList>
        <authorList>
            <person name="Lefranc M.P."/>
            <person name="Lefranc G."/>
        </authorList>
    </citation>
    <scope>NOMENCLATURE</scope>
</reference>
<reference key="4">
    <citation type="journal article" date="2004" name="Nat. Rev. Immunol.">
        <title>The many important facets of T-cell repertoire diversity.</title>
        <authorList>
            <person name="Nikolich-Zugich J."/>
            <person name="Slifka M.K."/>
            <person name="Messaoudi I."/>
        </authorList>
    </citation>
    <scope>REVIEW ON T CELL REPERTOIRE DIVERSITY</scope>
</reference>
<reference key="5">
    <citation type="journal article" date="2010" name="Cold Spring Harb. Perspect. Biol.">
        <title>Structural biology of the T-cell receptor: insights into receptor assembly, ligand recognition, and initiation of signaling.</title>
        <authorList>
            <person name="Wucherpfennig K.W."/>
            <person name="Gagnon E."/>
            <person name="Call M.J."/>
            <person name="Huseby E.S."/>
            <person name="Call M.E."/>
        </authorList>
    </citation>
    <scope>REVIEW ON T CELL RECEPTOR-CD3 COMPLEX ASSEMBLY</scope>
    <scope>SUBCELLULAR LOCATION</scope>
</reference>
<reference key="6">
    <citation type="journal article" date="2013" name="Nat. Rev. Immunol.">
        <title>T cell receptor signalling networks: branched, diversified and bounded.</title>
        <authorList>
            <person name="Brownlie R.J."/>
            <person name="Zamoyska R."/>
        </authorList>
    </citation>
    <scope>REVIEW ON T CELL RECEPTOR SIGNALING</scope>
</reference>
<reference key="7">
    <citation type="journal article" date="2014" name="Front. Immunol.">
        <title>Immunoglobulin and T Cell Receptor Genes: IMGT((R)) and the Birth and Rise of Immunoinformatics.</title>
        <authorList>
            <person name="Lefranc M.P."/>
        </authorList>
    </citation>
    <scope>NOMENCLATURE</scope>
</reference>
<reference key="8">
    <citation type="journal article" date="2015" name="Annu. Rev. Immunol.">
        <title>T cell antigen receptor recognition of antigen-presenting molecules.</title>
        <authorList>
            <person name="Rossjohn J."/>
            <person name="Gras S."/>
            <person name="Miles J.J."/>
            <person name="Turner S.J."/>
            <person name="Godfrey D.I."/>
            <person name="McCluskey J."/>
        </authorList>
    </citation>
    <scope>REVIEW ON FUNCTION</scope>
</reference>
<evidence type="ECO:0000255" key="1"/>
<evidence type="ECO:0000255" key="2">
    <source>
        <dbReference type="PROSITE-ProRule" id="PRU00114"/>
    </source>
</evidence>
<evidence type="ECO:0000269" key="3">
    <source>
    </source>
</evidence>
<evidence type="ECO:0000303" key="4">
    <source>
    </source>
</evidence>
<evidence type="ECO:0000303" key="5">
    <source>
    </source>
</evidence>
<evidence type="ECO:0000303" key="6">
    <source>
    </source>
</evidence>
<evidence type="ECO:0000303" key="7">
    <source>
    </source>
</evidence>
<evidence type="ECO:0000303" key="8">
    <source>
    </source>
</evidence>
<evidence type="ECO:0000303" key="9">
    <source>
    </source>
</evidence>
<evidence type="ECO:0000303" key="10">
    <source ref="3"/>
</evidence>
<evidence type="ECO:0000305" key="11"/>
<evidence type="ECO:0000312" key="12">
    <source>
        <dbReference type="HGNC" id="HGNC:12235"/>
    </source>
</evidence>
<organism>
    <name type="scientific">Homo sapiens</name>
    <name type="common">Human</name>
    <dbReference type="NCBI Taxonomy" id="9606"/>
    <lineage>
        <taxon>Eukaryota</taxon>
        <taxon>Metazoa</taxon>
        <taxon>Chordata</taxon>
        <taxon>Craniata</taxon>
        <taxon>Vertebrata</taxon>
        <taxon>Euteleostomi</taxon>
        <taxon>Mammalia</taxon>
        <taxon>Eutheria</taxon>
        <taxon>Euarchontoglires</taxon>
        <taxon>Primates</taxon>
        <taxon>Haplorrhini</taxon>
        <taxon>Catarrhini</taxon>
        <taxon>Hominidae</taxon>
        <taxon>Homo</taxon>
    </lineage>
</organism>
<feature type="signal peptide" evidence="1">
    <location>
        <begin position="1"/>
        <end position="21"/>
    </location>
</feature>
<feature type="chain" id="PRO_0000450775" description="Probable non-functional T cell receptor beta variable 7-1" evidence="1">
    <location>
        <begin position="22"/>
        <end position="115"/>
    </location>
</feature>
<feature type="domain" description="Ig-like" evidence="2">
    <location>
        <begin position="22"/>
        <end position="115" status="greater than"/>
    </location>
</feature>
<feature type="non-terminal residue">
    <location>
        <position position="115"/>
    </location>
</feature>
<proteinExistence type="evidence at protein level"/>
<name>TVB71_HUMAN</name>
<comment type="function">
    <text evidence="3 4 6 7 8">Probable non-functional open reading frame (ORF) of V region of the variable domain of T cell receptor (TR) beta chain (PubMed:24600447). Non-functional ORF generally cannot participate in the synthesis of a productive T cell receptor (TR) chain due to altered V-(D)-J or switch recombination and/or splicing site (at mRNA level) and/or conserved amino acid change (protein level) (PubMed:9619395). Alpha-beta T cell receptors are antigen specific receptors which are essential to the immune response and are present on the cell surface of T lymphocytes. Recognize peptide-major histocompatibility (MH) (pMH) complexes that are displayed by antigen presenting cells (APC), a prerequisite for efficient T cell adaptive immunity against pathogens (PubMed:25493333). Binding of alpha-beta TR to pMH complex initiates TR-CD3 clustering on the cell surface and intracellular activation of LCK that phosphorylates the ITAM motifs of CD3G, CD3D, CD3E and CD247 enabling the recruitment of ZAP70. In turn ZAP70 phosphorylates LAT, which recruits numerous signaling molecules to form the LAT signalosome. The LAT signalosome propagates signal branching to three major signaling pathways, the calcium, the mitogen-activated protein kinase (MAPK) kinase and the nuclear factor NF-kappa-B (NF-kB) pathways, leading to the mobilization of transcription factors that are critical for gene expression and essential for T cell growth and differentiation (PubMed:23524462). The T cell repertoire is generated in the thymus, by V-(D)-J rearrangement. This repertoire is then shaped by intrathymic selection events to generate a peripheral T cell pool of self-MH restricted, non-autoaggressive T cells. Post-thymic interaction of alpha-beta TR with the pMH complexes shapes TR structural and functional avidity (PubMed:15040585).</text>
</comment>
<comment type="subunit">
    <text evidence="5 11">Most probably, the alpha-beta TR is not assembled due to incorrect folding of the beta chain (Probable). Alpha-beta TR is a heterodimer composed of an alpha and beta chain; disulfide-linked. The alpha-beta TR is associated with the transmembrane signaling CD3 coreceptor proteins to form the TR-CD3 (TcR or TCR). The assembly of alpha-beta TR heterodimers with CD3 occurs in the endoplasmic reticulum where a single alpha-beta TR heterodimer associates with one CD3D-CD3E heterodimer, one CD3G-CD3E heterodimer and one CD247 homodimer forming a stable octameric structure. CD3D-CD3E and CD3G-CD3E heterodimers preferentially associate with TR alpha and TR beta chains, respectively. The association of the CD247 homodimer is the last step of TcR assembly in the endoplasmic reticulum and is required for transport to the cell surface.</text>
</comment>
<comment type="subcellular location">
    <subcellularLocation>
        <location evidence="5">Cell membrane</location>
    </subcellularLocation>
</comment>
<comment type="polymorphism">
    <text evidence="11">There are several alleles. The sequence shown is that of IMGT allele TRBV7-1*01.</text>
</comment>
<comment type="caution">
    <text evidence="9 11">Most probably a non-functional protein that cannot participate to the synthesis of a productive T cell receptor (TR) chain due to a mutation at position 42, corresponding to the first cysteine from the disulfide bridge, potentially leading to uncorrect folding (PubMed:9619395).</text>
</comment>
<dbReference type="EMBL" id="AC231381">
    <property type="status" value="NOT_ANNOTATED_CDS"/>
    <property type="molecule type" value="Genomic_DNA"/>
</dbReference>
<dbReference type="EMBL" id="AC245088">
    <property type="status" value="NOT_ANNOTATED_CDS"/>
    <property type="molecule type" value="Genomic_DNA"/>
</dbReference>
<dbReference type="SMR" id="A0A0A6YYK4"/>
<dbReference type="FunCoup" id="A0A0A6YYK4">
    <property type="interactions" value="377"/>
</dbReference>
<dbReference type="BioMuta" id="TRBV7-1"/>
<dbReference type="Ensembl" id="ENST00000547918.2">
    <property type="protein sequence ID" value="ENSP00000448600.2"/>
    <property type="gene ID" value="ENSG00000211707.3"/>
</dbReference>
<dbReference type="Ensembl" id="ENST00000632308.1">
    <property type="protein sequence ID" value="ENSP00000488287.1"/>
    <property type="gene ID" value="ENSG00000282225.1"/>
</dbReference>
<dbReference type="AGR" id="HGNC:12235"/>
<dbReference type="GeneCards" id="TRBV7-1"/>
<dbReference type="HGNC" id="HGNC:12235">
    <property type="gene designation" value="TRBV7-1"/>
</dbReference>
<dbReference type="HPA" id="ENSG00000211707">
    <property type="expression patterns" value="Tissue enhanced (pancreas, testis)"/>
</dbReference>
<dbReference type="neXtProt" id="NX_A0A0A6YYK4"/>
<dbReference type="OpenTargets" id="ENSG00000211707"/>
<dbReference type="VEuPathDB" id="HostDB:ENSG00000211707"/>
<dbReference type="GeneTree" id="ENSGT00940000154460"/>
<dbReference type="HOGENOM" id="CLU_077975_9_4_1"/>
<dbReference type="InParanoid" id="A0A0A6YYK4"/>
<dbReference type="OMA" id="FSTCVST"/>
<dbReference type="OrthoDB" id="9536814at2759"/>
<dbReference type="PAN-GO" id="A0A0A6YYK4">
    <property type="GO annotations" value="2 GO annotations based on evolutionary models"/>
</dbReference>
<dbReference type="PRO" id="PR:A0A0A6YYK4"/>
<dbReference type="Proteomes" id="UP000005640">
    <property type="component" value="Chromosome 7"/>
</dbReference>
<dbReference type="RNAct" id="A0A0A6YYK4">
    <property type="molecule type" value="protein"/>
</dbReference>
<dbReference type="Bgee" id="ENSG00000211707">
    <property type="expression patterns" value="Expressed in male germ line stem cell (sensu Vertebrata) in testis and 41 other cell types or tissues"/>
</dbReference>
<dbReference type="GO" id="GO:0005886">
    <property type="term" value="C:plasma membrane"/>
    <property type="evidence" value="ECO:0000318"/>
    <property type="project" value="GO_Central"/>
</dbReference>
<dbReference type="GO" id="GO:0042101">
    <property type="term" value="C:T cell receptor complex"/>
    <property type="evidence" value="ECO:0007669"/>
    <property type="project" value="UniProtKB-KW"/>
</dbReference>
<dbReference type="GO" id="GO:0002250">
    <property type="term" value="P:adaptive immune response"/>
    <property type="evidence" value="ECO:0007669"/>
    <property type="project" value="UniProtKB-KW"/>
</dbReference>
<dbReference type="GO" id="GO:0007166">
    <property type="term" value="P:cell surface receptor signaling pathway"/>
    <property type="evidence" value="ECO:0000318"/>
    <property type="project" value="GO_Central"/>
</dbReference>
<dbReference type="Gene3D" id="2.60.40.10">
    <property type="entry name" value="Immunoglobulins"/>
    <property type="match status" value="1"/>
</dbReference>
<dbReference type="InterPro" id="IPR036179">
    <property type="entry name" value="Ig-like_dom_sf"/>
</dbReference>
<dbReference type="InterPro" id="IPR013783">
    <property type="entry name" value="Ig-like_fold"/>
</dbReference>
<dbReference type="InterPro" id="IPR013106">
    <property type="entry name" value="Ig_V-set"/>
</dbReference>
<dbReference type="InterPro" id="IPR050413">
    <property type="entry name" value="TCR_beta_variable"/>
</dbReference>
<dbReference type="PANTHER" id="PTHR23268:SF108">
    <property type="entry name" value="T CELL RECEPTOR BETA VARIABLE 7-2-RELATED"/>
    <property type="match status" value="1"/>
</dbReference>
<dbReference type="PANTHER" id="PTHR23268">
    <property type="entry name" value="T-CELL RECEPTOR BETA CHAIN"/>
    <property type="match status" value="1"/>
</dbReference>
<dbReference type="Pfam" id="PF07686">
    <property type="entry name" value="V-set"/>
    <property type="match status" value="1"/>
</dbReference>
<dbReference type="SUPFAM" id="SSF48726">
    <property type="entry name" value="Immunoglobulin"/>
    <property type="match status" value="1"/>
</dbReference>
<sequence>MGTRLLCWAAICLLGADHTGAGVSQSLRHKVAKKGKDVALRYDPISGHNALYWYRQSLGQGLEFPIYFQGKDAADKSGLPRDRFSAQRSEGSISTLKFQRTQQGDLAVYLCASSS</sequence>
<gene>
    <name evidence="10 12" type="primary">TRBV7-1</name>
</gene>
<protein>
    <recommendedName>
        <fullName evidence="11">Probable non-functional T cell receptor beta variable 7-1</fullName>
    </recommendedName>
</protein>
<keyword id="KW-1064">Adaptive immunity</keyword>
<keyword id="KW-1003">Cell membrane</keyword>
<keyword id="KW-0391">Immunity</keyword>
<keyword id="KW-0393">Immunoglobulin domain</keyword>
<keyword id="KW-0472">Membrane</keyword>
<keyword id="KW-0675">Receptor</keyword>
<keyword id="KW-1185">Reference proteome</keyword>
<keyword id="KW-0732">Signal</keyword>
<keyword id="KW-1279">T cell receptor</keyword>
<accession>A0A0A6YYK4</accession>